<evidence type="ECO:0000255" key="1"/>
<evidence type="ECO:0000303" key="2">
    <source>
    </source>
</evidence>
<evidence type="ECO:0000305" key="3"/>
<evidence type="ECO:0000305" key="4">
    <source>
    </source>
</evidence>
<reference key="1">
    <citation type="journal article" date="2019" name="Toxins">
        <title>The diversified O-superfamily in Californiconus californicus presents a conotoxin with antimycobacterial activity.</title>
        <authorList>
            <person name="Bernaldez-Sarabia J."/>
            <person name="Figueroa-Montiel A."/>
            <person name="Duenas S."/>
            <person name="Cervantes-Luevano K."/>
            <person name="Beltran J.A."/>
            <person name="Ortiz E."/>
            <person name="Jimenez S."/>
            <person name="Possani L.D."/>
            <person name="Paniagua-Solis J.F."/>
            <person name="Gonzalez-Canudas J."/>
            <person name="Licea-Navarro A."/>
        </authorList>
    </citation>
    <scope>NUCLEOTIDE SEQUENCE [MRNA]</scope>
    <source>
        <tissue>Venom duct</tissue>
    </source>
</reference>
<dbReference type="SMR" id="P0DUA2"/>
<dbReference type="GO" id="GO:0005576">
    <property type="term" value="C:extracellular region"/>
    <property type="evidence" value="ECO:0007669"/>
    <property type="project" value="UniProtKB-SubCell"/>
</dbReference>
<dbReference type="GO" id="GO:0090729">
    <property type="term" value="F:toxin activity"/>
    <property type="evidence" value="ECO:0007669"/>
    <property type="project" value="UniProtKB-KW"/>
</dbReference>
<comment type="function">
    <text evidence="3">Probable neurotoxin.</text>
</comment>
<comment type="subcellular location">
    <subcellularLocation>
        <location evidence="4">Secreted</location>
    </subcellularLocation>
</comment>
<comment type="tissue specificity">
    <text evidence="4">Expressed by the venom duct.</text>
</comment>
<comment type="domain">
    <text evidence="3">The cysteine framework is VI/VII (C-C-CC-C-C).</text>
</comment>
<comment type="domain">
    <text evidence="3">The presence of a 'disulfide through disulfide knot' structurally defines this protein as a knottin.</text>
</comment>
<proteinExistence type="inferred from homology"/>
<keyword id="KW-1015">Disulfide bond</keyword>
<keyword id="KW-0960">Knottin</keyword>
<keyword id="KW-0528">Neurotoxin</keyword>
<keyword id="KW-0964">Secreted</keyword>
<keyword id="KW-0732">Signal</keyword>
<keyword id="KW-0800">Toxin</keyword>
<protein>
    <recommendedName>
        <fullName evidence="3">Conotoxin Cal6.40</fullName>
    </recommendedName>
    <alternativeName>
        <fullName evidence="2">O3_cal6.2</fullName>
    </alternativeName>
</protein>
<feature type="signal peptide" evidence="1">
    <location>
        <begin position="1"/>
        <end position="21"/>
    </location>
</feature>
<feature type="chain" id="PRO_0000450984" description="Conotoxin Cal6.40" evidence="3">
    <location>
        <begin position="22"/>
        <end position="55"/>
    </location>
</feature>
<feature type="disulfide bond" evidence="3">
    <location>
        <begin position="24"/>
        <end position="36"/>
    </location>
</feature>
<feature type="disulfide bond" evidence="3">
    <location>
        <begin position="29"/>
        <end position="41"/>
    </location>
</feature>
<feature type="disulfide bond" evidence="3">
    <location>
        <begin position="35"/>
        <end position="50"/>
    </location>
</feature>
<name>C640_CONCL</name>
<organism>
    <name type="scientific">Californiconus californicus</name>
    <name type="common">California cone</name>
    <name type="synonym">Conus californicus</name>
    <dbReference type="NCBI Taxonomy" id="1736779"/>
    <lineage>
        <taxon>Eukaryota</taxon>
        <taxon>Metazoa</taxon>
        <taxon>Spiralia</taxon>
        <taxon>Lophotrochozoa</taxon>
        <taxon>Mollusca</taxon>
        <taxon>Gastropoda</taxon>
        <taxon>Caenogastropoda</taxon>
        <taxon>Neogastropoda</taxon>
        <taxon>Conoidea</taxon>
        <taxon>Conidae</taxon>
        <taxon>Californiconus</taxon>
    </lineage>
</organism>
<accession>P0DUA2</accession>
<sequence length="55" mass="5683">MSGSGVLLLTLLLLVPLSALAKECSMYYCSGGDFCCPGLKCGDPTGKKICIEPGK</sequence>